<protein>
    <recommendedName>
        <fullName evidence="1">Co-chaperone protein HscB</fullName>
    </recommendedName>
    <alternativeName>
        <fullName evidence="1">Hsc20</fullName>
    </alternativeName>
</protein>
<sequence length="171" mass="20138">MDYFTLFGLPARYQLDTQALSLRFQDLQRQYHPDKFASGSQAEQLAAVQQSATINQAWQTLRHPLMRAEYLLSLHGFDLASEQHTVRDTAFLMEQLELREELDEIEQAKDEARLESFIKRVKKMFDTRHQLMVEQLDNETWDAAADTVRKLRFLDKLRSSAEQLEEKLLDF</sequence>
<accession>B7N6B4</accession>
<keyword id="KW-0143">Chaperone</keyword>
<proteinExistence type="inferred from homology"/>
<organism>
    <name type="scientific">Escherichia coli O17:K52:H18 (strain UMN026 / ExPEC)</name>
    <dbReference type="NCBI Taxonomy" id="585056"/>
    <lineage>
        <taxon>Bacteria</taxon>
        <taxon>Pseudomonadati</taxon>
        <taxon>Pseudomonadota</taxon>
        <taxon>Gammaproteobacteria</taxon>
        <taxon>Enterobacterales</taxon>
        <taxon>Enterobacteriaceae</taxon>
        <taxon>Escherichia</taxon>
    </lineage>
</organism>
<name>HSCB_ECOLU</name>
<dbReference type="EMBL" id="CU928163">
    <property type="protein sequence ID" value="CAR14023.1"/>
    <property type="molecule type" value="Genomic_DNA"/>
</dbReference>
<dbReference type="RefSeq" id="WP_000384413.1">
    <property type="nucleotide sequence ID" value="NC_011751.1"/>
</dbReference>
<dbReference type="RefSeq" id="YP_002413549.1">
    <property type="nucleotide sequence ID" value="NC_011751.1"/>
</dbReference>
<dbReference type="SMR" id="B7N6B4"/>
<dbReference type="STRING" id="585056.ECUMN_2847"/>
<dbReference type="GeneID" id="75172640"/>
<dbReference type="KEGG" id="eum:ECUMN_2847"/>
<dbReference type="PATRIC" id="fig|585056.7.peg.3033"/>
<dbReference type="HOGENOM" id="CLU_068529_2_0_6"/>
<dbReference type="Proteomes" id="UP000007097">
    <property type="component" value="Chromosome"/>
</dbReference>
<dbReference type="GO" id="GO:1990230">
    <property type="term" value="C:iron-sulfur cluster transfer complex"/>
    <property type="evidence" value="ECO:0007669"/>
    <property type="project" value="TreeGrafter"/>
</dbReference>
<dbReference type="GO" id="GO:0001671">
    <property type="term" value="F:ATPase activator activity"/>
    <property type="evidence" value="ECO:0007669"/>
    <property type="project" value="InterPro"/>
</dbReference>
<dbReference type="GO" id="GO:0051087">
    <property type="term" value="F:protein-folding chaperone binding"/>
    <property type="evidence" value="ECO:0007669"/>
    <property type="project" value="InterPro"/>
</dbReference>
<dbReference type="GO" id="GO:0044571">
    <property type="term" value="P:[2Fe-2S] cluster assembly"/>
    <property type="evidence" value="ECO:0007669"/>
    <property type="project" value="InterPro"/>
</dbReference>
<dbReference type="GO" id="GO:0051259">
    <property type="term" value="P:protein complex oligomerization"/>
    <property type="evidence" value="ECO:0007669"/>
    <property type="project" value="InterPro"/>
</dbReference>
<dbReference type="GO" id="GO:0006457">
    <property type="term" value="P:protein folding"/>
    <property type="evidence" value="ECO:0007669"/>
    <property type="project" value="UniProtKB-UniRule"/>
</dbReference>
<dbReference type="CDD" id="cd06257">
    <property type="entry name" value="DnaJ"/>
    <property type="match status" value="1"/>
</dbReference>
<dbReference type="FunFam" id="1.10.287.110:FF:000008">
    <property type="entry name" value="Co-chaperone protein HscB"/>
    <property type="match status" value="1"/>
</dbReference>
<dbReference type="FunFam" id="1.20.1280.20:FF:000001">
    <property type="entry name" value="Co-chaperone protein HscB"/>
    <property type="match status" value="1"/>
</dbReference>
<dbReference type="Gene3D" id="1.10.287.110">
    <property type="entry name" value="DnaJ domain"/>
    <property type="match status" value="1"/>
</dbReference>
<dbReference type="Gene3D" id="1.20.1280.20">
    <property type="entry name" value="HscB, C-terminal domain"/>
    <property type="match status" value="1"/>
</dbReference>
<dbReference type="HAMAP" id="MF_00682">
    <property type="entry name" value="HscB"/>
    <property type="match status" value="1"/>
</dbReference>
<dbReference type="InterPro" id="IPR001623">
    <property type="entry name" value="DnaJ_domain"/>
</dbReference>
<dbReference type="InterPro" id="IPR004640">
    <property type="entry name" value="HscB"/>
</dbReference>
<dbReference type="InterPro" id="IPR036386">
    <property type="entry name" value="HscB_C_sf"/>
</dbReference>
<dbReference type="InterPro" id="IPR009073">
    <property type="entry name" value="HscB_oligo_C"/>
</dbReference>
<dbReference type="InterPro" id="IPR036869">
    <property type="entry name" value="J_dom_sf"/>
</dbReference>
<dbReference type="NCBIfam" id="TIGR00714">
    <property type="entry name" value="hscB"/>
    <property type="match status" value="1"/>
</dbReference>
<dbReference type="NCBIfam" id="NF003449">
    <property type="entry name" value="PRK05014.1"/>
    <property type="match status" value="1"/>
</dbReference>
<dbReference type="PANTHER" id="PTHR14021">
    <property type="entry name" value="IRON-SULFUR CLUSTER CO-CHAPERONE PROTEIN HSCB"/>
    <property type="match status" value="1"/>
</dbReference>
<dbReference type="PANTHER" id="PTHR14021:SF15">
    <property type="entry name" value="IRON-SULFUR CLUSTER CO-CHAPERONE PROTEIN HSCB"/>
    <property type="match status" value="1"/>
</dbReference>
<dbReference type="Pfam" id="PF07743">
    <property type="entry name" value="HSCB_C"/>
    <property type="match status" value="1"/>
</dbReference>
<dbReference type="SMART" id="SM00271">
    <property type="entry name" value="DnaJ"/>
    <property type="match status" value="1"/>
</dbReference>
<dbReference type="SUPFAM" id="SSF46565">
    <property type="entry name" value="Chaperone J-domain"/>
    <property type="match status" value="1"/>
</dbReference>
<dbReference type="SUPFAM" id="SSF47144">
    <property type="entry name" value="HSC20 (HSCB), C-terminal oligomerisation domain"/>
    <property type="match status" value="1"/>
</dbReference>
<dbReference type="PROSITE" id="PS50076">
    <property type="entry name" value="DNAJ_2"/>
    <property type="match status" value="1"/>
</dbReference>
<feature type="chain" id="PRO_1000131737" description="Co-chaperone protein HscB">
    <location>
        <begin position="1"/>
        <end position="171"/>
    </location>
</feature>
<feature type="domain" description="J" evidence="1">
    <location>
        <begin position="2"/>
        <end position="74"/>
    </location>
</feature>
<evidence type="ECO:0000255" key="1">
    <source>
        <dbReference type="HAMAP-Rule" id="MF_00682"/>
    </source>
</evidence>
<gene>
    <name evidence="1" type="primary">hscB</name>
    <name type="ordered locus">ECUMN_2847</name>
</gene>
<comment type="function">
    <text evidence="1">Co-chaperone involved in the maturation of iron-sulfur cluster-containing proteins. Seems to help targeting proteins to be folded toward HscA.</text>
</comment>
<comment type="subunit">
    <text evidence="1">Interacts with HscA and stimulates its ATPase activity. Interacts with IscU.</text>
</comment>
<comment type="similarity">
    <text evidence="1">Belongs to the HscB family.</text>
</comment>
<reference key="1">
    <citation type="journal article" date="2009" name="PLoS Genet.">
        <title>Organised genome dynamics in the Escherichia coli species results in highly diverse adaptive paths.</title>
        <authorList>
            <person name="Touchon M."/>
            <person name="Hoede C."/>
            <person name="Tenaillon O."/>
            <person name="Barbe V."/>
            <person name="Baeriswyl S."/>
            <person name="Bidet P."/>
            <person name="Bingen E."/>
            <person name="Bonacorsi S."/>
            <person name="Bouchier C."/>
            <person name="Bouvet O."/>
            <person name="Calteau A."/>
            <person name="Chiapello H."/>
            <person name="Clermont O."/>
            <person name="Cruveiller S."/>
            <person name="Danchin A."/>
            <person name="Diard M."/>
            <person name="Dossat C."/>
            <person name="Karoui M.E."/>
            <person name="Frapy E."/>
            <person name="Garry L."/>
            <person name="Ghigo J.M."/>
            <person name="Gilles A.M."/>
            <person name="Johnson J."/>
            <person name="Le Bouguenec C."/>
            <person name="Lescat M."/>
            <person name="Mangenot S."/>
            <person name="Martinez-Jehanne V."/>
            <person name="Matic I."/>
            <person name="Nassif X."/>
            <person name="Oztas S."/>
            <person name="Petit M.A."/>
            <person name="Pichon C."/>
            <person name="Rouy Z."/>
            <person name="Ruf C.S."/>
            <person name="Schneider D."/>
            <person name="Tourret J."/>
            <person name="Vacherie B."/>
            <person name="Vallenet D."/>
            <person name="Medigue C."/>
            <person name="Rocha E.P.C."/>
            <person name="Denamur E."/>
        </authorList>
    </citation>
    <scope>NUCLEOTIDE SEQUENCE [LARGE SCALE GENOMIC DNA]</scope>
    <source>
        <strain>UMN026 / ExPEC</strain>
    </source>
</reference>